<reference key="1">
    <citation type="journal article" date="1988" name="Virology">
        <title>Analysis of a large cluster of nonessential genes deleted from a vaccinia virus terminal transposition mutant.</title>
        <authorList>
            <person name="Kotwal G.J."/>
            <person name="Moss B."/>
        </authorList>
    </citation>
    <scope>NUCLEOTIDE SEQUENCE [GENOMIC DNA]</scope>
</reference>
<reference key="2">
    <citation type="submission" date="2003-02" db="EMBL/GenBank/DDBJ databases">
        <title>Sequencing of the coding region of Vaccinia-WR to an average 9-fold redundancy and an error rate of 0.16/10kb.</title>
        <authorList>
            <person name="Esposito J.J."/>
            <person name="Frace A.M."/>
            <person name="Sammons S.A."/>
            <person name="Olsen-Rasmussen M."/>
            <person name="Osborne J."/>
            <person name="Wohlhueter R."/>
        </authorList>
    </citation>
    <scope>NUCLEOTIDE SEQUENCE [LARGE SCALE GENOMIC DNA]</scope>
</reference>
<reference key="3">
    <citation type="journal article" date="2011" name="PLoS Pathog.">
        <title>Vaccinia virus protein C6 is a virulence factor that binds TBK-1 adaptor proteins and inhibits activation of IRF3 and IRF7.</title>
        <authorList>
            <person name="Unterholzner L."/>
            <person name="Sumner R.P."/>
            <person name="Baran M."/>
            <person name="Ren H."/>
            <person name="Mansur D.S."/>
            <person name="Bourke N.M."/>
            <person name="Randow F."/>
            <person name="Smith G.L."/>
            <person name="Bowie A.G."/>
        </authorList>
    </citation>
    <scope>FUNCTION</scope>
    <scope>INTERACTION WITH HOST TANK; TBKBP1 AND AZI2</scope>
</reference>
<reference key="4">
    <citation type="journal article" date="2016" name="PLoS Pathog.">
        <title>Vaccinia Virus Protein C6 Inhibits Type I IFN Signalling in the Nucleus and Binds to the Transactivation Domain of STAT2.</title>
        <authorList>
            <person name="Stuart J.H."/>
            <person name="Sumner R.P."/>
            <person name="Lu Y."/>
            <person name="Snowden J.S."/>
            <person name="Smith G.L."/>
        </authorList>
    </citation>
    <scope>FUNCTION</scope>
    <scope>INTERACTION WITH HOST STAT2</scope>
</reference>
<reference key="5">
    <citation type="journal article" date="2015" name="J. Virol.">
        <title>Deciphering poxvirus gene expression by RNA sequencing and ribosome profiling.</title>
        <authorList>
            <person name="Yang Z."/>
            <person name="Cao S."/>
            <person name="Martens C.A."/>
            <person name="Porcella S.F."/>
            <person name="Xie Z."/>
            <person name="Ma M."/>
            <person name="Shen B."/>
            <person name="Moss B."/>
        </authorList>
    </citation>
    <scope>INDUCTION</scope>
</reference>
<name>PG029_VACCW</name>
<accession>P17362</accession>
<accession>Q76ZY6</accession>
<proteinExistence type="evidence at protein level"/>
<gene>
    <name type="primary">OPG029</name>
    <name type="synonym">B16L</name>
    <name type="synonym">C6L</name>
    <name type="synonym">D12L</name>
    <name type="synonym">D9L</name>
</gene>
<gene>
    <name type="ORF">VACWR022</name>
</gene>
<sequence>MNAYNKADSFSLESDSIKDVIHDYICWLSMTDEMRPSIGNVFKAMETFKIDAVRYYDGNIYELAKDINAMSFDGFIRSLQTIASKKDKLTVYGTMGLLSIVVDINKGCDISNIKFAAGIIILMEYIFDDTDMSHLKVALYRRIQRRDDVDR</sequence>
<comment type="function">
    <text evidence="1 3">Prevents establishment of cellular antiviral state by blocking virus-induced phosphorylation and activation of interferon regulatory factors 3/IRF3 and 7/IRF7, transcription factors critical for the induction of interferons alpha and beta. This blockage is produced through the inhibition of host TBK1, by binding host TBK1 adapter proteins TBKBP1 and AZI2, thereby producing a strong inhibition of the phosphorylation and activation of IRF3 and IRF7. Also acts as an inhibitor of the cellular response to type I IFN by interacting with host STAT2. Mechanistically, exerts its inhibitory effect after host ISGF3 complex (composed of STAT1, STAT2 and IRF9) binding to the interferon stimulated response element (ISRE).</text>
</comment>
<comment type="subunit">
    <text evidence="1 3">Interacts with host TANK, TBKBP1 and AZI2; these interactions prevent interferon production (PubMed:21931555). Interacts with host STAT2 (PubMed:27907166).</text>
</comment>
<comment type="interaction">
    <interactant intactId="EBI-9519257">
        <id>P17362</id>
    </interactant>
    <interactant intactId="EBI-359973">
        <id>Q9H6S1</id>
        <label>AZI2</label>
    </interactant>
    <organismsDiffer>true</organismsDiffer>
    <experiments>2</experiments>
</comment>
<comment type="interaction">
    <interactant intactId="EBI-9519257">
        <id>P17362</id>
    </interactant>
    <interactant intactId="EBI-356349">
        <id>Q92844</id>
        <label>TANK</label>
    </interactant>
    <organismsDiffer>true</organismsDiffer>
    <experiments>2</experiments>
</comment>
<comment type="interaction">
    <interactant intactId="EBI-9519257">
        <id>P17362</id>
    </interactant>
    <interactant intactId="EBI-359969">
        <id>A7MCY6</id>
        <label>TBKBP1</label>
    </interactant>
    <organismsDiffer>true</organismsDiffer>
    <experiments>2</experiments>
</comment>
<comment type="induction">
    <text evidence="2">Expressed in the early phase of the viral replicative cycle.</text>
</comment>
<comment type="similarity">
    <text evidence="4">Belongs to the orthopoxvirus OPG029 family.</text>
</comment>
<organism>
    <name type="scientific">Vaccinia virus (strain Western Reserve)</name>
    <name type="common">VACV</name>
    <name type="synonym">Vaccinia virus (strain WR)</name>
    <dbReference type="NCBI Taxonomy" id="10254"/>
    <lineage>
        <taxon>Viruses</taxon>
        <taxon>Varidnaviria</taxon>
        <taxon>Bamfordvirae</taxon>
        <taxon>Nucleocytoviricota</taxon>
        <taxon>Pokkesviricetes</taxon>
        <taxon>Chitovirales</taxon>
        <taxon>Poxviridae</taxon>
        <taxon>Chordopoxvirinae</taxon>
        <taxon>Orthopoxvirus</taxon>
        <taxon>Vaccinia virus</taxon>
    </lineage>
</organism>
<feature type="chain" id="PRO_0000099384" description="IFN signaling evasion protein OPG029">
    <location>
        <begin position="1"/>
        <end position="151"/>
    </location>
</feature>
<protein>
    <recommendedName>
        <fullName>IFN signaling evasion protein OPG029</fullName>
    </recommendedName>
</protein>
<keyword id="KW-0244">Early protein</keyword>
<keyword id="KW-0945">Host-virus interaction</keyword>
<keyword id="KW-1090">Inhibition of host innate immune response by virus</keyword>
<keyword id="KW-1114">Inhibition of host interferon signaling pathway by virus</keyword>
<keyword id="KW-1223">Inhibition of host TBK1 by virus</keyword>
<keyword id="KW-1225">Inhibition of host TLR pathway by virus</keyword>
<keyword id="KW-0922">Interferon antiviral system evasion</keyword>
<keyword id="KW-1185">Reference proteome</keyword>
<keyword id="KW-0899">Viral immunoevasion</keyword>
<organismHost>
    <name type="scientific">Bos taurus</name>
    <name type="common">Bovine</name>
    <dbReference type="NCBI Taxonomy" id="9913"/>
</organismHost>
<evidence type="ECO:0000269" key="1">
    <source>
    </source>
</evidence>
<evidence type="ECO:0000269" key="2">
    <source>
    </source>
</evidence>
<evidence type="ECO:0000269" key="3">
    <source>
    </source>
</evidence>
<evidence type="ECO:0000305" key="4"/>
<dbReference type="EMBL" id="M22812">
    <property type="protein sequence ID" value="AAA69602.1"/>
    <property type="molecule type" value="Genomic_DNA"/>
</dbReference>
<dbReference type="EMBL" id="AY243312">
    <property type="protein sequence ID" value="AAO89301.1"/>
    <property type="molecule type" value="Genomic_DNA"/>
</dbReference>
<dbReference type="PIR" id="B33348">
    <property type="entry name" value="WZVZB2"/>
</dbReference>
<dbReference type="RefSeq" id="YP_232904.1">
    <property type="nucleotide sequence ID" value="NC_006998.1"/>
</dbReference>
<dbReference type="SMR" id="P17362"/>
<dbReference type="IntAct" id="P17362">
    <property type="interactions" value="3"/>
</dbReference>
<dbReference type="DNASU" id="3707637"/>
<dbReference type="GeneID" id="3707637"/>
<dbReference type="KEGG" id="vg:3707637"/>
<dbReference type="Proteomes" id="UP000000344">
    <property type="component" value="Genome"/>
</dbReference>
<dbReference type="GO" id="GO:0030430">
    <property type="term" value="C:host cell cytoplasm"/>
    <property type="evidence" value="ECO:0000314"/>
    <property type="project" value="UniProtKB"/>
</dbReference>
<dbReference type="GO" id="GO:0042025">
    <property type="term" value="C:host cell nucleus"/>
    <property type="evidence" value="ECO:0000314"/>
    <property type="project" value="UniProtKB"/>
</dbReference>
<dbReference type="GO" id="GO:0005634">
    <property type="term" value="C:nucleus"/>
    <property type="evidence" value="ECO:0000305"/>
    <property type="project" value="UniProt"/>
</dbReference>
<dbReference type="GO" id="GO:0140311">
    <property type="term" value="F:protein sequestering activity"/>
    <property type="evidence" value="ECO:0000314"/>
    <property type="project" value="UniProt"/>
</dbReference>
<dbReference type="GO" id="GO:0039723">
    <property type="term" value="P:symbiont-mediated suppression of host cytoplasmic pattern recognition receptor signaling pathway via inhibition of TBK1 activity"/>
    <property type="evidence" value="ECO:0000314"/>
    <property type="project" value="UniProtKB"/>
</dbReference>
<dbReference type="GO" id="GO:0039722">
    <property type="term" value="P:symbiont-mediated suppression of host toll-like receptor signaling pathway"/>
    <property type="evidence" value="ECO:0007669"/>
    <property type="project" value="UniProtKB-KW"/>
</dbReference>
<dbReference type="GO" id="GO:0039502">
    <property type="term" value="P:symbiont-mediated suppression of host type I interferon-mediated signaling pathway"/>
    <property type="evidence" value="ECO:0000314"/>
    <property type="project" value="UniProtKB"/>
</dbReference>
<dbReference type="Gene3D" id="1.10.437.20">
    <property type="entry name" value="dsDNA poxvirus"/>
    <property type="match status" value="1"/>
</dbReference>
<dbReference type="InterPro" id="IPR022819">
    <property type="entry name" value="Poxvirus_Bcl-2-like"/>
</dbReference>
<dbReference type="InterPro" id="IPR043018">
    <property type="entry name" value="Poxvirus_sf"/>
</dbReference>
<dbReference type="Pfam" id="PF06227">
    <property type="entry name" value="Poxv_Bcl-2-like"/>
    <property type="match status" value="1"/>
</dbReference>